<protein>
    <recommendedName>
        <fullName evidence="1">ATP synthase subunit a</fullName>
    </recommendedName>
    <alternativeName>
        <fullName evidence="1">ATP synthase F0 sector subunit a</fullName>
    </alternativeName>
    <alternativeName>
        <fullName evidence="1">F-ATPase subunit 6</fullName>
    </alternativeName>
</protein>
<gene>
    <name evidence="1" type="primary">atpB</name>
    <name type="ordered locus">ZMO0667</name>
</gene>
<dbReference type="EMBL" id="AE008692">
    <property type="protein sequence ID" value="AAV89291.1"/>
    <property type="molecule type" value="Genomic_DNA"/>
</dbReference>
<dbReference type="RefSeq" id="WP_011240561.1">
    <property type="nucleotide sequence ID" value="NZ_CP035711.1"/>
</dbReference>
<dbReference type="SMR" id="Q5NPR9"/>
<dbReference type="STRING" id="264203.ZMO0667"/>
<dbReference type="KEGG" id="zmo:ZMO0667"/>
<dbReference type="eggNOG" id="COG0356">
    <property type="taxonomic scope" value="Bacteria"/>
</dbReference>
<dbReference type="HOGENOM" id="CLU_041018_0_2_5"/>
<dbReference type="Proteomes" id="UP000001173">
    <property type="component" value="Chromosome"/>
</dbReference>
<dbReference type="GO" id="GO:0005886">
    <property type="term" value="C:plasma membrane"/>
    <property type="evidence" value="ECO:0007669"/>
    <property type="project" value="UniProtKB-SubCell"/>
</dbReference>
<dbReference type="GO" id="GO:0045259">
    <property type="term" value="C:proton-transporting ATP synthase complex"/>
    <property type="evidence" value="ECO:0007669"/>
    <property type="project" value="UniProtKB-KW"/>
</dbReference>
<dbReference type="GO" id="GO:0046933">
    <property type="term" value="F:proton-transporting ATP synthase activity, rotational mechanism"/>
    <property type="evidence" value="ECO:0007669"/>
    <property type="project" value="UniProtKB-UniRule"/>
</dbReference>
<dbReference type="CDD" id="cd00310">
    <property type="entry name" value="ATP-synt_Fo_a_6"/>
    <property type="match status" value="1"/>
</dbReference>
<dbReference type="Gene3D" id="1.20.120.220">
    <property type="entry name" value="ATP synthase, F0 complex, subunit A"/>
    <property type="match status" value="1"/>
</dbReference>
<dbReference type="HAMAP" id="MF_01393">
    <property type="entry name" value="ATP_synth_a_bact"/>
    <property type="match status" value="1"/>
</dbReference>
<dbReference type="InterPro" id="IPR000568">
    <property type="entry name" value="ATP_synth_F0_asu"/>
</dbReference>
<dbReference type="InterPro" id="IPR045083">
    <property type="entry name" value="ATP_synth_F0_asu_bact/mt"/>
</dbReference>
<dbReference type="InterPro" id="IPR035908">
    <property type="entry name" value="F0_ATP_A_sf"/>
</dbReference>
<dbReference type="NCBIfam" id="TIGR01131">
    <property type="entry name" value="ATP_synt_6_or_A"/>
    <property type="match status" value="1"/>
</dbReference>
<dbReference type="NCBIfam" id="NF004482">
    <property type="entry name" value="PRK05815.2-4"/>
    <property type="match status" value="1"/>
</dbReference>
<dbReference type="PANTHER" id="PTHR11410">
    <property type="entry name" value="ATP SYNTHASE SUBUNIT A"/>
    <property type="match status" value="1"/>
</dbReference>
<dbReference type="PANTHER" id="PTHR11410:SF0">
    <property type="entry name" value="ATP SYNTHASE SUBUNIT A"/>
    <property type="match status" value="1"/>
</dbReference>
<dbReference type="Pfam" id="PF00119">
    <property type="entry name" value="ATP-synt_A"/>
    <property type="match status" value="1"/>
</dbReference>
<dbReference type="PRINTS" id="PR00123">
    <property type="entry name" value="ATPASEA"/>
</dbReference>
<dbReference type="SUPFAM" id="SSF81336">
    <property type="entry name" value="F1F0 ATP synthase subunit A"/>
    <property type="match status" value="1"/>
</dbReference>
<comment type="function">
    <text evidence="1">Key component of the proton channel; it plays a direct role in the translocation of protons across the membrane.</text>
</comment>
<comment type="subunit">
    <text evidence="1">F-type ATPases have 2 components, CF(1) - the catalytic core - and CF(0) - the membrane proton channel. CF(1) has five subunits: alpha(3), beta(3), gamma(1), delta(1), epsilon(1). CF(0) has three main subunits: a(1), b(2) and c(9-12). The alpha and beta chains form an alternating ring which encloses part of the gamma chain. CF(1) is attached to CF(0) by a central stalk formed by the gamma and epsilon chains, while a peripheral stalk is formed by the delta and b chains.</text>
</comment>
<comment type="subcellular location">
    <subcellularLocation>
        <location evidence="1">Cell inner membrane</location>
        <topology evidence="1">Multi-pass membrane protein</topology>
    </subcellularLocation>
</comment>
<comment type="similarity">
    <text evidence="1">Belongs to the ATPase A chain family.</text>
</comment>
<accession>Q5NPR9</accession>
<sequence>MAATNNVDPMHQFTVEPLHGLHIGKYDISFTNSALWMVIAMAALAIFMAGGRRKALIPGRWQMAVEVMTRFVNDMVSTNIGPKGRPFTPLIFTLFMFILFANLLGLVPLFGFLPGAEPFTSTSHVTVTATLAAIAFGTVLVVGFTRHGLGFFKLFVPHGTPMALIWLIPGIEAFSFILRPFSLALRLFVAMTAGHVLLEVLANFIVNPPVQSASPAFLAGYYTLVGIPTFLLMIGISALEFLVCAIQAYVFALLTSLYLNDAINLH</sequence>
<proteinExistence type="inferred from homology"/>
<reference key="1">
    <citation type="journal article" date="2005" name="Nat. Biotechnol.">
        <title>The genome sequence of the ethanologenic bacterium Zymomonas mobilis ZM4.</title>
        <authorList>
            <person name="Seo J.-S."/>
            <person name="Chong H."/>
            <person name="Park H.S."/>
            <person name="Yoon K.-O."/>
            <person name="Jung C."/>
            <person name="Kim J.J."/>
            <person name="Hong J.H."/>
            <person name="Kim H."/>
            <person name="Kim J.-H."/>
            <person name="Kil J.-I."/>
            <person name="Park C.J."/>
            <person name="Oh H.-M."/>
            <person name="Lee J.-S."/>
            <person name="Jin S.-J."/>
            <person name="Um H.-W."/>
            <person name="Lee H.-J."/>
            <person name="Oh S.-J."/>
            <person name="Kim J.Y."/>
            <person name="Kang H.L."/>
            <person name="Lee S.Y."/>
            <person name="Lee K.J."/>
            <person name="Kang H.S."/>
        </authorList>
    </citation>
    <scope>NUCLEOTIDE SEQUENCE [LARGE SCALE GENOMIC DNA]</scope>
    <source>
        <strain>ATCC 31821 / ZM4 / CP4</strain>
    </source>
</reference>
<feature type="chain" id="PRO_0000362522" description="ATP synthase subunit a">
    <location>
        <begin position="1"/>
        <end position="266"/>
    </location>
</feature>
<feature type="transmembrane region" description="Helical" evidence="1">
    <location>
        <begin position="28"/>
        <end position="48"/>
    </location>
</feature>
<feature type="transmembrane region" description="Helical" evidence="1">
    <location>
        <begin position="90"/>
        <end position="110"/>
    </location>
</feature>
<feature type="transmembrane region" description="Helical" evidence="1">
    <location>
        <begin position="125"/>
        <end position="145"/>
    </location>
</feature>
<feature type="transmembrane region" description="Helical" evidence="1">
    <location>
        <begin position="158"/>
        <end position="178"/>
    </location>
</feature>
<feature type="transmembrane region" description="Helical" evidence="1">
    <location>
        <begin position="187"/>
        <end position="207"/>
    </location>
</feature>
<feature type="transmembrane region" description="Helical" evidence="1">
    <location>
        <begin position="216"/>
        <end position="236"/>
    </location>
</feature>
<feature type="transmembrane region" description="Helical" evidence="1">
    <location>
        <begin position="239"/>
        <end position="259"/>
    </location>
</feature>
<keyword id="KW-0066">ATP synthesis</keyword>
<keyword id="KW-0997">Cell inner membrane</keyword>
<keyword id="KW-1003">Cell membrane</keyword>
<keyword id="KW-0138">CF(0)</keyword>
<keyword id="KW-0375">Hydrogen ion transport</keyword>
<keyword id="KW-0406">Ion transport</keyword>
<keyword id="KW-0472">Membrane</keyword>
<keyword id="KW-1185">Reference proteome</keyword>
<keyword id="KW-0812">Transmembrane</keyword>
<keyword id="KW-1133">Transmembrane helix</keyword>
<keyword id="KW-0813">Transport</keyword>
<evidence type="ECO:0000255" key="1">
    <source>
        <dbReference type="HAMAP-Rule" id="MF_01393"/>
    </source>
</evidence>
<name>ATP6_ZYMMO</name>
<organism>
    <name type="scientific">Zymomonas mobilis subsp. mobilis (strain ATCC 31821 / ZM4 / CP4)</name>
    <dbReference type="NCBI Taxonomy" id="264203"/>
    <lineage>
        <taxon>Bacteria</taxon>
        <taxon>Pseudomonadati</taxon>
        <taxon>Pseudomonadota</taxon>
        <taxon>Alphaproteobacteria</taxon>
        <taxon>Sphingomonadales</taxon>
        <taxon>Zymomonadaceae</taxon>
        <taxon>Zymomonas</taxon>
    </lineage>
</organism>